<name>RPOC1_CYAPA</name>
<organism>
    <name type="scientific">Cyanophora paradoxa</name>
    <dbReference type="NCBI Taxonomy" id="2762"/>
    <lineage>
        <taxon>Eukaryota</taxon>
        <taxon>Glaucocystophyceae</taxon>
        <taxon>Cyanophoraceae</taxon>
        <taxon>Cyanophora</taxon>
    </lineage>
</organism>
<comment type="function">
    <text evidence="1">DNA-dependent RNA polymerase catalyzes the transcription of DNA into RNA using the four ribonucleoside triphosphates as substrates.</text>
</comment>
<comment type="catalytic activity">
    <reaction evidence="1">
        <text>RNA(n) + a ribonucleoside 5'-triphosphate = RNA(n+1) + diphosphate</text>
        <dbReference type="Rhea" id="RHEA:21248"/>
        <dbReference type="Rhea" id="RHEA-COMP:14527"/>
        <dbReference type="Rhea" id="RHEA-COMP:17342"/>
        <dbReference type="ChEBI" id="CHEBI:33019"/>
        <dbReference type="ChEBI" id="CHEBI:61557"/>
        <dbReference type="ChEBI" id="CHEBI:140395"/>
        <dbReference type="EC" id="2.7.7.6"/>
    </reaction>
</comment>
<comment type="cofactor">
    <cofactor evidence="1">
        <name>Mg(2+)</name>
        <dbReference type="ChEBI" id="CHEBI:18420"/>
    </cofactor>
    <text evidence="1">Binds 1 Mg(2+) ion per subunit.</text>
</comment>
<comment type="cofactor">
    <cofactor evidence="1">
        <name>Zn(2+)</name>
        <dbReference type="ChEBI" id="CHEBI:29105"/>
    </cofactor>
    <text evidence="1">Binds 1 Zn(2+) ion per subunit.</text>
</comment>
<comment type="subcellular location">
    <subcellularLocation>
        <location>Plastid</location>
        <location>Cyanelle</location>
    </subcellularLocation>
</comment>
<comment type="similarity">
    <text evidence="1">Belongs to the RNA polymerase beta' chain family. RpoC1 subfamily.</text>
</comment>
<accession>P42080</accession>
<evidence type="ECO:0000255" key="1">
    <source>
        <dbReference type="HAMAP-Rule" id="MF_01323"/>
    </source>
</evidence>
<evidence type="ECO:0000305" key="2"/>
<protein>
    <recommendedName>
        <fullName evidence="1">DNA-directed RNA polymerase subunit beta'</fullName>
        <ecNumber evidence="1">2.7.7.6</ecNumber>
    </recommendedName>
    <alternativeName>
        <fullName evidence="1">PEP</fullName>
    </alternativeName>
    <alternativeName>
        <fullName evidence="1">Plastid-encoded RNA polymerase subunit beta'</fullName>
        <shortName evidence="1">RNA polymerase subunit beta'</shortName>
    </alternativeName>
</protein>
<dbReference type="EC" id="2.7.7.6" evidence="1"/>
<dbReference type="EMBL" id="U30821">
    <property type="protein sequence ID" value="AAA81260.1"/>
    <property type="molecule type" value="Genomic_DNA"/>
</dbReference>
<dbReference type="EMBL" id="Z11152">
    <property type="protein sequence ID" value="CAA77503.1"/>
    <property type="molecule type" value="Genomic_DNA"/>
</dbReference>
<dbReference type="PIR" id="T06917">
    <property type="entry name" value="T06917"/>
</dbReference>
<dbReference type="RefSeq" id="NP_043229.1">
    <property type="nucleotide sequence ID" value="NC_001675.1"/>
</dbReference>
<dbReference type="SMR" id="P42080"/>
<dbReference type="GeneID" id="801645"/>
<dbReference type="GO" id="GO:0009842">
    <property type="term" value="C:cyanelle"/>
    <property type="evidence" value="ECO:0007669"/>
    <property type="project" value="UniProtKB-SubCell"/>
</dbReference>
<dbReference type="GO" id="GO:0000428">
    <property type="term" value="C:DNA-directed RNA polymerase complex"/>
    <property type="evidence" value="ECO:0007669"/>
    <property type="project" value="UniProtKB-KW"/>
</dbReference>
<dbReference type="GO" id="GO:0005739">
    <property type="term" value="C:mitochondrion"/>
    <property type="evidence" value="ECO:0007669"/>
    <property type="project" value="GOC"/>
</dbReference>
<dbReference type="GO" id="GO:0003677">
    <property type="term" value="F:DNA binding"/>
    <property type="evidence" value="ECO:0007669"/>
    <property type="project" value="UniProtKB-UniRule"/>
</dbReference>
<dbReference type="GO" id="GO:0003899">
    <property type="term" value="F:DNA-directed RNA polymerase activity"/>
    <property type="evidence" value="ECO:0007669"/>
    <property type="project" value="UniProtKB-UniRule"/>
</dbReference>
<dbReference type="GO" id="GO:0000287">
    <property type="term" value="F:magnesium ion binding"/>
    <property type="evidence" value="ECO:0007669"/>
    <property type="project" value="UniProtKB-UniRule"/>
</dbReference>
<dbReference type="GO" id="GO:0008270">
    <property type="term" value="F:zinc ion binding"/>
    <property type="evidence" value="ECO:0007669"/>
    <property type="project" value="UniProtKB-UniRule"/>
</dbReference>
<dbReference type="GO" id="GO:0006351">
    <property type="term" value="P:DNA-templated transcription"/>
    <property type="evidence" value="ECO:0007669"/>
    <property type="project" value="UniProtKB-UniRule"/>
</dbReference>
<dbReference type="Gene3D" id="1.10.40.90">
    <property type="match status" value="1"/>
</dbReference>
<dbReference type="Gene3D" id="2.40.40.20">
    <property type="match status" value="1"/>
</dbReference>
<dbReference type="Gene3D" id="4.10.860.120">
    <property type="entry name" value="RNA polymerase II, clamp domain"/>
    <property type="match status" value="1"/>
</dbReference>
<dbReference type="Gene3D" id="1.10.274.100">
    <property type="entry name" value="RNA polymerase Rpb1, domain 3"/>
    <property type="match status" value="1"/>
</dbReference>
<dbReference type="HAMAP" id="MF_01323">
    <property type="entry name" value="RNApol_bact_RpoC1"/>
    <property type="match status" value="1"/>
</dbReference>
<dbReference type="InterPro" id="IPR012755">
    <property type="entry name" value="DNA-dir_RpoC1_gamma"/>
</dbReference>
<dbReference type="InterPro" id="IPR045867">
    <property type="entry name" value="DNA-dir_RpoC_beta_prime"/>
</dbReference>
<dbReference type="InterPro" id="IPR000722">
    <property type="entry name" value="RNA_pol_asu"/>
</dbReference>
<dbReference type="InterPro" id="IPR006592">
    <property type="entry name" value="RNA_pol_N"/>
</dbReference>
<dbReference type="InterPro" id="IPR007080">
    <property type="entry name" value="RNA_pol_Rpb1_1"/>
</dbReference>
<dbReference type="InterPro" id="IPR007066">
    <property type="entry name" value="RNA_pol_Rpb1_3"/>
</dbReference>
<dbReference type="InterPro" id="IPR042102">
    <property type="entry name" value="RNA_pol_Rpb1_3_sf"/>
</dbReference>
<dbReference type="InterPro" id="IPR044893">
    <property type="entry name" value="RNA_pol_Rpb1_clamp_domain"/>
</dbReference>
<dbReference type="InterPro" id="IPR034678">
    <property type="entry name" value="RNApol_RpoC1"/>
</dbReference>
<dbReference type="NCBIfam" id="NF002729">
    <property type="entry name" value="PRK02625.1"/>
    <property type="match status" value="1"/>
</dbReference>
<dbReference type="NCBIfam" id="TIGR02387">
    <property type="entry name" value="rpoC1_cyan"/>
    <property type="match status" value="1"/>
</dbReference>
<dbReference type="PANTHER" id="PTHR19376">
    <property type="entry name" value="DNA-DIRECTED RNA POLYMERASE"/>
    <property type="match status" value="1"/>
</dbReference>
<dbReference type="PANTHER" id="PTHR19376:SF54">
    <property type="entry name" value="DNA-DIRECTED RNA POLYMERASE SUBUNIT BETA"/>
    <property type="match status" value="1"/>
</dbReference>
<dbReference type="Pfam" id="PF04997">
    <property type="entry name" value="RNA_pol_Rpb1_1"/>
    <property type="match status" value="1"/>
</dbReference>
<dbReference type="Pfam" id="PF00623">
    <property type="entry name" value="RNA_pol_Rpb1_2"/>
    <property type="match status" value="2"/>
</dbReference>
<dbReference type="Pfam" id="PF04983">
    <property type="entry name" value="RNA_pol_Rpb1_3"/>
    <property type="match status" value="1"/>
</dbReference>
<dbReference type="SMART" id="SM00663">
    <property type="entry name" value="RPOLA_N"/>
    <property type="match status" value="1"/>
</dbReference>
<dbReference type="SUPFAM" id="SSF64484">
    <property type="entry name" value="beta and beta-prime subunits of DNA dependent RNA-polymerase"/>
    <property type="match status" value="1"/>
</dbReference>
<reference key="1">
    <citation type="journal article" date="1995" name="Plant Mol. Biol. Rep.">
        <title>Nucleotide sequence of the cyanelle DNA from Cyanophora paradoxa.</title>
        <authorList>
            <person name="Stirewalt V.L."/>
            <person name="Michalowski C.B."/>
            <person name="Loeffelhardt W."/>
            <person name="Bohnert H.J."/>
            <person name="Bryant D.A."/>
        </authorList>
    </citation>
    <scope>NUCLEOTIDE SEQUENCE [LARGE SCALE GENOMIC DNA]</scope>
    <source>
        <strain>UTEX LB 555 / Pringsheim</strain>
    </source>
</reference>
<reference key="2">
    <citation type="book" date="1997" name="Eukaryotism and symbiosis">
        <title>The complete sequence of the cyanelle genome of Cyanophora paradoxa: the genetic complexity of a primitive plastid.</title>
        <editorList>
            <person name="Schenk H.E.A."/>
            <person name="Herrmann R."/>
            <person name="Jeon K.W."/>
            <person name="Mueller N.E."/>
            <person name="Schwemmler W."/>
        </editorList>
        <authorList>
            <person name="Loeffelhardt W."/>
            <person name="Stirewalt V.L."/>
            <person name="Michalowski C.B."/>
            <person name="Annarella M."/>
            <person name="Farley J.Y."/>
            <person name="Schluchter W.M."/>
            <person name="Chung S."/>
            <person name="Newmann-Spallart C."/>
            <person name="Steiner J.M."/>
            <person name="Jakowitsch J."/>
            <person name="Bohnert H.J."/>
            <person name="Bryant D.A."/>
        </authorList>
    </citation>
    <scope>NUCLEOTIDE SEQUENCE [LARGE SCALE GENOMIC DNA]</scope>
    <source>
        <strain>UTEX LB 555 / Pringsheim</strain>
    </source>
</reference>
<reference key="3">
    <citation type="journal article" date="1992" name="Nature">
        <title>Multiple evolutionary origins of prochlorophytes, the chlorophyll b-containing prokaryotes.</title>
        <authorList>
            <person name="Palenik B."/>
            <person name="Haselkorn R."/>
        </authorList>
    </citation>
    <scope>NUCLEOTIDE SEQUENCE [GENOMIC DNA] OF 37-244</scope>
</reference>
<feature type="chain" id="PRO_0000067871" description="DNA-directed RNA polymerase subunit beta'">
    <location>
        <begin position="1"/>
        <end position="636"/>
    </location>
</feature>
<feature type="binding site" evidence="1">
    <location>
        <position position="70"/>
    </location>
    <ligand>
        <name>Zn(2+)</name>
        <dbReference type="ChEBI" id="CHEBI:29105"/>
    </ligand>
</feature>
<feature type="binding site" evidence="1">
    <location>
        <position position="72"/>
    </location>
    <ligand>
        <name>Zn(2+)</name>
        <dbReference type="ChEBI" id="CHEBI:29105"/>
    </ligand>
</feature>
<feature type="binding site" evidence="1">
    <location>
        <position position="85"/>
    </location>
    <ligand>
        <name>Zn(2+)</name>
        <dbReference type="ChEBI" id="CHEBI:29105"/>
    </ligand>
</feature>
<feature type="binding site" evidence="1">
    <location>
        <position position="88"/>
    </location>
    <ligand>
        <name>Zn(2+)</name>
        <dbReference type="ChEBI" id="CHEBI:29105"/>
    </ligand>
</feature>
<feature type="binding site" evidence="1">
    <location>
        <position position="471"/>
    </location>
    <ligand>
        <name>Mg(2+)</name>
        <dbReference type="ChEBI" id="CHEBI:18420"/>
    </ligand>
</feature>
<feature type="binding site" evidence="1">
    <location>
        <position position="473"/>
    </location>
    <ligand>
        <name>Mg(2+)</name>
        <dbReference type="ChEBI" id="CHEBI:18420"/>
    </ligand>
</feature>
<feature type="binding site" evidence="1">
    <location>
        <position position="475"/>
    </location>
    <ligand>
        <name>Mg(2+)</name>
        <dbReference type="ChEBI" id="CHEBI:18420"/>
    </ligand>
</feature>
<feature type="sequence conflict" description="In Ref. 3; CAA77503." evidence="2" ref="3">
    <original>K</original>
    <variation>T</variation>
    <location>
        <position position="151"/>
    </location>
</feature>
<feature type="sequence conflict" description="In Ref. 3; CAA77503." evidence="2" ref="3">
    <original>V</original>
    <variation>D</variation>
    <location>
        <position position="159"/>
    </location>
</feature>
<gene>
    <name evidence="1" type="primary">rpoC1</name>
</gene>
<sequence>MPKHEQYFDYVKINLASPERIRQWGERILKNGEIVGKITKPETINYRTLKPEMDGLFCEKIFGPVKDWECHCGKYKSIFYRGVICERCGVEITESQVRRHRMGYIELAAPVTHIWYLKGIPSYISILLNKKVKEIEQVVYFNAYVVLNPGKSDLLNYGVILTEDDEKWPYIEEKLYTKELMDVELGIGAEAIQRLLSDLDLQAEAKTIREILISNSDKKKNTQKRAKLIKKLRIINNFIATKAKPEWMILSLIPVIPPDLRPMVQLDGGRFATSDLNDLYRRVINRNNRLLRLQEVFAPEIVVRNEKRILQEAVDALIDNGRRGRIVVGAKNRPLKSLSDIIEGKQGRFRQNLLGKRVDYSGRSVIVVGLQLKLYQCGLPWEMAIELFQPFVIHRLIHQGLVNNIKAAKKLIQSNDPIIRDILEEVIQNHPVLLNRAPTLHRLSIQAFEPILVEGRAIQLHPLVCPAFNADFDGDQMAVHVPLSLEAQTEARLLMLASNNLLSPATGQPIVTPSQDMVLGCYYLTVDNLKNQKGKGSYFINSEDVLIAYEQQRIDLHSYIWVRFDTFSFDDILEEKNIQQVLYKREIDEFGTVIKVYNTRRIREDKDGFCLTQYIITTAGRVLFNKVVQKALIMEI</sequence>
<proteinExistence type="inferred from homology"/>
<geneLocation type="cyanelle"/>
<keyword id="KW-0194">Cyanelle</keyword>
<keyword id="KW-0240">DNA-directed RNA polymerase</keyword>
<keyword id="KW-0460">Magnesium</keyword>
<keyword id="KW-0479">Metal-binding</keyword>
<keyword id="KW-0548">Nucleotidyltransferase</keyword>
<keyword id="KW-0934">Plastid</keyword>
<keyword id="KW-0804">Transcription</keyword>
<keyword id="KW-0808">Transferase</keyword>
<keyword id="KW-0862">Zinc</keyword>